<keyword id="KW-0119">Carbohydrate metabolism</keyword>
<keyword id="KW-0963">Cytoplasm</keyword>
<keyword id="KW-0413">Isomerase</keyword>
<keyword id="KW-0479">Metal-binding</keyword>
<keyword id="KW-1185">Reference proteome</keyword>
<keyword id="KW-0862">Zinc</keyword>
<gene>
    <name evidence="1" type="primary">gmhA</name>
    <name type="ordered locus">THEYE_A0660</name>
</gene>
<name>GMHA_THEYD</name>
<sequence length="201" mass="22124">MEIEDKIRKAYEESVRVKEQFFRENISLIKEVAEIIAKSLNEGGKILIFGNGGSATDASHIAAEFVNRFKRERPGLPAIALNTDMAVLTAIANDYDYSEIFAKQVKALGESGDIVIGISTSGSSRNVIKAIEVAKKRGLKSIAFTSKKGEKLISKVDYAFAVPSEDTPRIQETHITLGHILCELVEDILFEIPAAKKKLKQ</sequence>
<accession>B5YJT7</accession>
<evidence type="ECO:0000255" key="1">
    <source>
        <dbReference type="HAMAP-Rule" id="MF_00067"/>
    </source>
</evidence>
<protein>
    <recommendedName>
        <fullName evidence="1">Phosphoheptose isomerase</fullName>
        <ecNumber evidence="1">5.3.1.28</ecNumber>
    </recommendedName>
    <alternativeName>
        <fullName evidence="1">Sedoheptulose 7-phosphate isomerase</fullName>
    </alternativeName>
</protein>
<feature type="chain" id="PRO_1000092295" description="Phosphoheptose isomerase">
    <location>
        <begin position="1"/>
        <end position="201"/>
    </location>
</feature>
<feature type="domain" description="SIS" evidence="1">
    <location>
        <begin position="36"/>
        <end position="195"/>
    </location>
</feature>
<feature type="binding site" evidence="1">
    <location>
        <begin position="51"/>
        <end position="53"/>
    </location>
    <ligand>
        <name>substrate</name>
    </ligand>
</feature>
<feature type="binding site" evidence="1">
    <location>
        <position position="60"/>
    </location>
    <ligand>
        <name>Zn(2+)</name>
        <dbReference type="ChEBI" id="CHEBI:29105"/>
    </ligand>
</feature>
<feature type="binding site" evidence="1">
    <location>
        <position position="64"/>
    </location>
    <ligand>
        <name>substrate</name>
    </ligand>
</feature>
<feature type="binding site" evidence="1">
    <location>
        <position position="64"/>
    </location>
    <ligand>
        <name>Zn(2+)</name>
        <dbReference type="ChEBI" id="CHEBI:29105"/>
    </ligand>
</feature>
<feature type="binding site" evidence="1">
    <location>
        <begin position="93"/>
        <end position="94"/>
    </location>
    <ligand>
        <name>substrate</name>
    </ligand>
</feature>
<feature type="binding site" evidence="1">
    <location>
        <begin position="119"/>
        <end position="121"/>
    </location>
    <ligand>
        <name>substrate</name>
    </ligand>
</feature>
<feature type="binding site" evidence="1">
    <location>
        <position position="124"/>
    </location>
    <ligand>
        <name>substrate</name>
    </ligand>
</feature>
<feature type="binding site" evidence="1">
    <location>
        <position position="171"/>
    </location>
    <ligand>
        <name>substrate</name>
    </ligand>
</feature>
<feature type="binding site" evidence="1">
    <location>
        <position position="171"/>
    </location>
    <ligand>
        <name>Zn(2+)</name>
        <dbReference type="ChEBI" id="CHEBI:29105"/>
    </ligand>
</feature>
<feature type="binding site" evidence="1">
    <location>
        <position position="179"/>
    </location>
    <ligand>
        <name>Zn(2+)</name>
        <dbReference type="ChEBI" id="CHEBI:29105"/>
    </ligand>
</feature>
<comment type="function">
    <text evidence="1">Catalyzes the isomerization of sedoheptulose 7-phosphate in D-glycero-D-manno-heptose 7-phosphate.</text>
</comment>
<comment type="catalytic activity">
    <reaction evidence="1">
        <text>2 D-sedoheptulose 7-phosphate = D-glycero-alpha-D-manno-heptose 7-phosphate + D-glycero-beta-D-manno-heptose 7-phosphate</text>
        <dbReference type="Rhea" id="RHEA:27489"/>
        <dbReference type="ChEBI" id="CHEBI:57483"/>
        <dbReference type="ChEBI" id="CHEBI:60203"/>
        <dbReference type="ChEBI" id="CHEBI:60204"/>
        <dbReference type="EC" id="5.3.1.28"/>
    </reaction>
</comment>
<comment type="cofactor">
    <cofactor evidence="1">
        <name>Zn(2+)</name>
        <dbReference type="ChEBI" id="CHEBI:29105"/>
    </cofactor>
    <text evidence="1">Binds 1 zinc ion per subunit.</text>
</comment>
<comment type="pathway">
    <text evidence="1">Carbohydrate biosynthesis; D-glycero-D-manno-heptose 7-phosphate biosynthesis; D-glycero-alpha-D-manno-heptose 7-phosphate and D-glycero-beta-D-manno-heptose 7-phosphate from sedoheptulose 7-phosphate: step 1/1.</text>
</comment>
<comment type="subcellular location">
    <subcellularLocation>
        <location evidence="1">Cytoplasm</location>
    </subcellularLocation>
</comment>
<comment type="miscellaneous">
    <text evidence="1">The reaction produces a racemic mixture of D-glycero-alpha-D-manno-heptose 7-phosphate and D-glycero-beta-D-manno-heptose 7-phosphate.</text>
</comment>
<comment type="similarity">
    <text evidence="1">Belongs to the SIS family. GmhA subfamily.</text>
</comment>
<organism>
    <name type="scientific">Thermodesulfovibrio yellowstonii (strain ATCC 51303 / DSM 11347 / YP87)</name>
    <dbReference type="NCBI Taxonomy" id="289376"/>
    <lineage>
        <taxon>Bacteria</taxon>
        <taxon>Pseudomonadati</taxon>
        <taxon>Nitrospirota</taxon>
        <taxon>Thermodesulfovibrionia</taxon>
        <taxon>Thermodesulfovibrionales</taxon>
        <taxon>Thermodesulfovibrionaceae</taxon>
        <taxon>Thermodesulfovibrio</taxon>
    </lineage>
</organism>
<reference key="1">
    <citation type="submission" date="2008-08" db="EMBL/GenBank/DDBJ databases">
        <title>The complete genome sequence of Thermodesulfovibrio yellowstonii strain ATCC 51303 / DSM 11347 / YP87.</title>
        <authorList>
            <person name="Dodson R.J."/>
            <person name="Durkin A.S."/>
            <person name="Wu M."/>
            <person name="Eisen J."/>
            <person name="Sutton G."/>
        </authorList>
    </citation>
    <scope>NUCLEOTIDE SEQUENCE [LARGE SCALE GENOMIC DNA]</scope>
    <source>
        <strain>ATCC 51303 / DSM 11347 / YP87</strain>
    </source>
</reference>
<dbReference type="EC" id="5.3.1.28" evidence="1"/>
<dbReference type="EMBL" id="CP001147">
    <property type="protein sequence ID" value="ACI21791.1"/>
    <property type="molecule type" value="Genomic_DNA"/>
</dbReference>
<dbReference type="RefSeq" id="WP_012546496.1">
    <property type="nucleotide sequence ID" value="NC_011296.1"/>
</dbReference>
<dbReference type="RefSeq" id="YP_002248502.1">
    <property type="nucleotide sequence ID" value="NC_011296.1"/>
</dbReference>
<dbReference type="SMR" id="B5YJT7"/>
<dbReference type="FunCoup" id="B5YJT7">
    <property type="interactions" value="61"/>
</dbReference>
<dbReference type="STRING" id="289376.THEYE_A0660"/>
<dbReference type="EnsemblBacteria" id="ACI21791">
    <property type="protein sequence ID" value="ACI21791"/>
    <property type="gene ID" value="THEYE_A0660"/>
</dbReference>
<dbReference type="KEGG" id="tye:THEYE_A0660"/>
<dbReference type="PATRIC" id="fig|289376.4.peg.653"/>
<dbReference type="eggNOG" id="COG0279">
    <property type="taxonomic scope" value="Bacteria"/>
</dbReference>
<dbReference type="HOGENOM" id="CLU_080999_3_0_0"/>
<dbReference type="InParanoid" id="B5YJT7"/>
<dbReference type="OrthoDB" id="9810929at2"/>
<dbReference type="UniPathway" id="UPA00041">
    <property type="reaction ID" value="UER00436"/>
</dbReference>
<dbReference type="Proteomes" id="UP000000718">
    <property type="component" value="Chromosome"/>
</dbReference>
<dbReference type="GO" id="GO:0005737">
    <property type="term" value="C:cytoplasm"/>
    <property type="evidence" value="ECO:0007669"/>
    <property type="project" value="UniProtKB-SubCell"/>
</dbReference>
<dbReference type="GO" id="GO:1990102">
    <property type="term" value="C:DnaA-DiaA complex"/>
    <property type="evidence" value="ECO:0000318"/>
    <property type="project" value="GO_Central"/>
</dbReference>
<dbReference type="GO" id="GO:0097367">
    <property type="term" value="F:carbohydrate derivative binding"/>
    <property type="evidence" value="ECO:0007669"/>
    <property type="project" value="InterPro"/>
</dbReference>
<dbReference type="GO" id="GO:0008968">
    <property type="term" value="F:D-sedoheptulose 7-phosphate isomerase activity"/>
    <property type="evidence" value="ECO:0007669"/>
    <property type="project" value="UniProtKB-UniRule"/>
</dbReference>
<dbReference type="GO" id="GO:0008270">
    <property type="term" value="F:zinc ion binding"/>
    <property type="evidence" value="ECO:0007669"/>
    <property type="project" value="UniProtKB-UniRule"/>
</dbReference>
<dbReference type="GO" id="GO:0005975">
    <property type="term" value="P:carbohydrate metabolic process"/>
    <property type="evidence" value="ECO:0007669"/>
    <property type="project" value="UniProtKB-UniRule"/>
</dbReference>
<dbReference type="GO" id="GO:2001061">
    <property type="term" value="P:D-glycero-D-manno-heptose 7-phosphate biosynthetic process"/>
    <property type="evidence" value="ECO:0007669"/>
    <property type="project" value="UniProtKB-UniPathway"/>
</dbReference>
<dbReference type="GO" id="GO:0032298">
    <property type="term" value="P:positive regulation of DNA-templated DNA replication initiation"/>
    <property type="evidence" value="ECO:0000318"/>
    <property type="project" value="GO_Central"/>
</dbReference>
<dbReference type="CDD" id="cd05006">
    <property type="entry name" value="SIS_GmhA"/>
    <property type="match status" value="1"/>
</dbReference>
<dbReference type="Gene3D" id="3.40.50.10490">
    <property type="entry name" value="Glucose-6-phosphate isomerase like protein, domain 1"/>
    <property type="match status" value="1"/>
</dbReference>
<dbReference type="HAMAP" id="MF_00067">
    <property type="entry name" value="GmhA"/>
    <property type="match status" value="1"/>
</dbReference>
<dbReference type="InterPro" id="IPR035461">
    <property type="entry name" value="GmhA/DiaA"/>
</dbReference>
<dbReference type="InterPro" id="IPR004515">
    <property type="entry name" value="Phosphoheptose_Isoase"/>
</dbReference>
<dbReference type="InterPro" id="IPR001347">
    <property type="entry name" value="SIS_dom"/>
</dbReference>
<dbReference type="InterPro" id="IPR046348">
    <property type="entry name" value="SIS_dom_sf"/>
</dbReference>
<dbReference type="InterPro" id="IPR050099">
    <property type="entry name" value="SIS_GmhA/DiaA_subfam"/>
</dbReference>
<dbReference type="PANTHER" id="PTHR30390:SF6">
    <property type="entry name" value="DNAA INITIATOR-ASSOCIATING PROTEIN DIAA"/>
    <property type="match status" value="1"/>
</dbReference>
<dbReference type="PANTHER" id="PTHR30390">
    <property type="entry name" value="SEDOHEPTULOSE 7-PHOSPHATE ISOMERASE / DNAA INITIATOR-ASSOCIATING FACTOR FOR REPLICATION INITIATION"/>
    <property type="match status" value="1"/>
</dbReference>
<dbReference type="Pfam" id="PF13580">
    <property type="entry name" value="SIS_2"/>
    <property type="match status" value="1"/>
</dbReference>
<dbReference type="SUPFAM" id="SSF53697">
    <property type="entry name" value="SIS domain"/>
    <property type="match status" value="1"/>
</dbReference>
<dbReference type="PROSITE" id="PS51464">
    <property type="entry name" value="SIS"/>
    <property type="match status" value="1"/>
</dbReference>
<proteinExistence type="inferred from homology"/>